<comment type="function">
    <molecule>Cytochrome b-c1 complex subunit Rieske, mitochondrial</molecule>
    <text evidence="1 3">Component of the ubiquinol-cytochrome c oxidoreductase, a multisubunit transmembrane complex that is part of the mitochondrial electron transport chain which drives oxidative phosphorylation. The respiratory chain contains 3 multisubunit complexes succinate dehydrogenase (complex II, CII), ubiquinol-cytochrome c oxidoreductase (cytochrome b-c1 complex, complex III, CIII) and cytochrome c oxidase (complex IV, CIV), that cooperate to transfer electrons derived from NADH and succinate to molecular oxygen, creating an electrochemical gradient over the inner membrane that drives transmembrane transport and the ATP synthase. The cytochrome b-c1 complex catalyzes electron transfer from ubiquinol to cytochrome c, linking this redox reaction to translocation of protons across the mitochondrial inner membrane, with protons being carried across the membrane as hydrogens on the quinol. In the process called Q cycle, 2 protons are consumed from the matrix, 4 protons are released into the intermembrane space and 2 electrons are passed to cytochrome c. The Rieske protein is a catalytic core subunit containing a [2Fe-2S] iron-sulfur cluster. It cycles between 2 conformational states during catalysis to transfer electrons from the quinol bound in the Q(0) site in cytochrome b to cytochrome c1 (By similarity). Incorporation of UQCRFS1 is the penultimate step in complex III assembly (By similarity).</text>
</comment>
<comment type="function">
    <molecule>Cytochrome b-c1 complex subunit 9</molecule>
    <text evidence="2 3 5">Component of the ubiquinol-cytochrome c oxidoreductase (cytochrome b-c1 complex, complex III, CIII). UQCRFS1 undergoes proteolytic processing once it is incorporated in the complex III dimer. One of the fragments, called subunit 9, corresponds to its mitochondrial targeting sequence (MTS) (By similarity). The proteolytic processing is necessary for the correct insertion of UQCRFS1 in the complex III dimer, but the persistence of UQCRFS1-derived fragments may prevent newly imported UQCRFS1 to be processed and assembled into complex III and is detrimental for the complex III structure and function (By similarity).</text>
</comment>
<comment type="catalytic activity">
    <reaction evidence="1">
        <text>a quinol + 2 Fe(III)-[cytochrome c](out) = a quinone + 2 Fe(II)-[cytochrome c](out) + 2 H(+)(out)</text>
        <dbReference type="Rhea" id="RHEA:11484"/>
        <dbReference type="Rhea" id="RHEA-COMP:10350"/>
        <dbReference type="Rhea" id="RHEA-COMP:14399"/>
        <dbReference type="ChEBI" id="CHEBI:15378"/>
        <dbReference type="ChEBI" id="CHEBI:24646"/>
        <dbReference type="ChEBI" id="CHEBI:29033"/>
        <dbReference type="ChEBI" id="CHEBI:29034"/>
        <dbReference type="ChEBI" id="CHEBI:132124"/>
        <dbReference type="EC" id="7.1.1.8"/>
    </reaction>
</comment>
<comment type="cofactor">
    <cofactor evidence="6">
        <name>[2Fe-2S] cluster</name>
        <dbReference type="ChEBI" id="CHEBI:190135"/>
    </cofactor>
    <text evidence="3 6">Binds 1 [2Fe-2S] cluster per subunit. Fe-S cluster delivery to the Rieske protein is mediated by components of the iron sulfur (Fe-S) cluster assembly machinery that reside in the mitochondrial matrix (including HSC20 and LYRM7) (By similarity).</text>
</comment>
<comment type="subunit">
    <molecule>Cytochrome b-c1 complex subunit Rieske, mitochondrial</molecule>
    <text evidence="2 3">Component of the ubiquinol-cytochrome c oxidoreductase (cytochrome b-c1 complex, complex III, CIII), a multisubunit enzyme composed of 11 subunits. The complex is composed of 3 respiratory subunits cytochrome b, cytochrome c1 and Rieske protein UQCRFS1, 2 core protein subunits UQCRC1/QCR1 and UQCRC2/QCR2, and 6 low-molecular weight protein subunits UQCRH/QCR6, UQCRB/QCR7, UQCRQ/QCR8, UQCR10/QCR9, UQCR11/QCR10 and subunit 9, the cleavage product of Rieske protein UQCRFS1. The complex exists as an obligatory dimer and forms supercomplexes (SCs) in the inner mitochondrial membrane with NADH-ubiquinone oxidoreductase (complex I, CI) and cytochrome c oxidase (complex IV, CIV), resulting in different assemblies (supercomplex SCI(1)III(2)IV(1) and megacomplex MCI(2)III(2)IV(2)) (By similarity). Incorporation of the Rieske protein UQCRFS1 is the penultimate step in complex III assembly. Interacts with TTC19, which is involved in the clearance of UQCRFS1 fragments (By similarity).</text>
</comment>
<comment type="subunit">
    <molecule>Cytochrome b-c1 complex subunit 9</molecule>
    <text evidence="2">Component of the ubiquinol-cytochrome c oxidoreductase (cytochrome b-c1 complex, complex III, CIII). Subunit 9 corresponds to the mitochondrial targeting sequence (MTS) of Rieske protein UQCRFS1. It is retained after processing and incorporated inside complex III, where it remains bound to the complex and localizes between the 2 core subunits UQCRC1/QCR1 and UQCRC2/QCR2.</text>
</comment>
<comment type="subcellular location">
    <subcellularLocation>
        <location evidence="4">Mitochondrion inner membrane</location>
        <topology evidence="4">Single-pass membrane protein</topology>
    </subcellularLocation>
</comment>
<comment type="PTM">
    <text evidence="5">Proteolytic processing is necessary for the correct insertion of UQCRFS1 in the complex III dimer. Several fragments are generated during UQCRFS1 insertion, most probably due to the endogenous matrix-processing peptidase (MPP) activity of the 2 core protein subunits UQCRC1/QCR1 and UQCRC2/QCR2, which are homologous to the 2 mitochondrial-processing peptidase (MPP) subunits beta-MPP and alpha-MPP respectively. The action of the protease is also necessary for the clearance of the UQCRFS1 fragments.</text>
</comment>
<comment type="miscellaneous">
    <text>The Rieske protein is a high potential 2Fe-2S protein.</text>
</comment>
<comment type="similarity">
    <text evidence="7">Belongs to the Rieske iron-sulfur protein family.</text>
</comment>
<comment type="caution">
    <text evidence="2 3">Several peptides are generated during UQCRFS1 insertion. According to some authors, the identification of the transit peptide as the subunit 9, does not necessary imply that it must be considered as a structural subunit of the complex III dimer as additional fragments from UQCRFS1 are also present.</text>
</comment>
<proteinExistence type="inferred from homology"/>
<accession>Q69BK5</accession>
<organism>
    <name type="scientific">Pan troglodytes</name>
    <name type="common">Chimpanzee</name>
    <dbReference type="NCBI Taxonomy" id="9598"/>
    <lineage>
        <taxon>Eukaryota</taxon>
        <taxon>Metazoa</taxon>
        <taxon>Chordata</taxon>
        <taxon>Craniata</taxon>
        <taxon>Vertebrata</taxon>
        <taxon>Euteleostomi</taxon>
        <taxon>Mammalia</taxon>
        <taxon>Eutheria</taxon>
        <taxon>Euarchontoglires</taxon>
        <taxon>Primates</taxon>
        <taxon>Haplorrhini</taxon>
        <taxon>Catarrhini</taxon>
        <taxon>Hominidae</taxon>
        <taxon>Pan</taxon>
    </lineage>
</organism>
<evidence type="ECO:0000250" key="1">
    <source>
        <dbReference type="UniProtKB" id="P08067"/>
    </source>
</evidence>
<evidence type="ECO:0000250" key="2">
    <source>
        <dbReference type="UniProtKB" id="P13272"/>
    </source>
</evidence>
<evidence type="ECO:0000250" key="3">
    <source>
        <dbReference type="UniProtKB" id="P47985"/>
    </source>
</evidence>
<evidence type="ECO:0000250" key="4">
    <source>
        <dbReference type="UniProtKB" id="Q5ZLR5"/>
    </source>
</evidence>
<evidence type="ECO:0000250" key="5">
    <source>
        <dbReference type="UniProtKB" id="Q9CR68"/>
    </source>
</evidence>
<evidence type="ECO:0000255" key="6">
    <source>
        <dbReference type="PROSITE-ProRule" id="PRU00628"/>
    </source>
</evidence>
<evidence type="ECO:0000305" key="7"/>
<name>UCRI_PANTR</name>
<feature type="chain" id="PRO_0000307246" description="Cytochrome b-c1 complex subunit 9" evidence="5">
    <location>
        <begin position="1"/>
        <end position="78"/>
    </location>
</feature>
<feature type="chain" id="PRO_0000030669" description="Cytochrome b-c1 complex subunit Rieske, mitochondrial">
    <location>
        <begin position="79"/>
        <end position="274"/>
    </location>
</feature>
<feature type="topological domain" description="Mitochondrial matrix" evidence="2">
    <location>
        <begin position="79"/>
        <end position="103"/>
    </location>
</feature>
<feature type="transmembrane region" description="Helical" evidence="2">
    <location>
        <begin position="104"/>
        <end position="140"/>
    </location>
</feature>
<feature type="topological domain" description="Mitochondrial intermembrane" evidence="2">
    <location>
        <begin position="141"/>
        <end position="274"/>
    </location>
</feature>
<feature type="domain" description="Rieske" evidence="6">
    <location>
        <begin position="187"/>
        <end position="272"/>
    </location>
</feature>
<feature type="binding site" evidence="2">
    <location>
        <position position="217"/>
    </location>
    <ligand>
        <name>[2Fe-2S] cluster</name>
        <dbReference type="ChEBI" id="CHEBI:190135"/>
    </ligand>
</feature>
<feature type="binding site" evidence="2">
    <location>
        <position position="219"/>
    </location>
    <ligand>
        <name>[2Fe-2S] cluster</name>
        <dbReference type="ChEBI" id="CHEBI:190135"/>
    </ligand>
</feature>
<feature type="binding site" evidence="2">
    <location>
        <position position="236"/>
    </location>
    <ligand>
        <name>[2Fe-2S] cluster</name>
        <dbReference type="ChEBI" id="CHEBI:190135"/>
    </ligand>
</feature>
<feature type="binding site" evidence="2">
    <location>
        <position position="239"/>
    </location>
    <ligand>
        <name>[2Fe-2S] cluster</name>
        <dbReference type="ChEBI" id="CHEBI:190135"/>
    </ligand>
</feature>
<feature type="binding site" evidence="2">
    <location>
        <position position="241"/>
    </location>
    <ligand>
        <name>[2Fe-2S] cluster</name>
        <dbReference type="ChEBI" id="CHEBI:190135"/>
    </ligand>
</feature>
<feature type="disulfide bond" evidence="2">
    <location>
        <begin position="222"/>
        <end position="238"/>
    </location>
</feature>
<protein>
    <recommendedName>
        <fullName>Cytochrome b-c1 complex subunit Rieske, mitochondrial</fullName>
        <ecNumber>7.1.1.8</ecNumber>
    </recommendedName>
    <alternativeName>
        <fullName>Complex III subunit 5</fullName>
    </alternativeName>
    <alternativeName>
        <fullName>Cytochrome b-c1 complex subunit 5</fullName>
    </alternativeName>
    <alternativeName>
        <fullName>Rieske iron-sulfur protein</fullName>
        <shortName>RISP</shortName>
    </alternativeName>
    <alternativeName>
        <fullName evidence="7">Rieske protein UQCRFS1</fullName>
    </alternativeName>
    <alternativeName>
        <fullName>Ubiquinol-cytochrome c reductase iron-sulfur subunit</fullName>
    </alternativeName>
    <component>
        <recommendedName>
            <fullName evidence="2">Cytochrome b-c1 complex subunit 9</fullName>
            <shortName evidence="2">Su9</shortName>
            <shortName evidence="2">Subunit 9</shortName>
        </recommendedName>
        <alternativeName>
            <fullName evidence="2">8 kDa subunit 9</fullName>
        </alternativeName>
        <alternativeName>
            <fullName>Complex III subunit IX</fullName>
        </alternativeName>
        <alternativeName>
            <fullName>Cytochrome b-c1 complex subunit 11</fullName>
        </alternativeName>
        <alternativeName>
            <fullName>UQCRFS1 mitochondrial targeting sequence</fullName>
            <shortName>UQCRFS1 MTS</shortName>
        </alternativeName>
        <alternativeName>
            <fullName evidence="2">Ubiquinol-cytochrome c reductase 8 kDa protein</fullName>
        </alternativeName>
    </component>
</protein>
<sequence>MLSVAARSGPFAPVLSATSRGVAGALRPLVQATVPATPEQPVLDLKRPFLSRESLSGQAVRRPLVASVGLNVPASVCYSHTDVKVPDFSEYRRLEVLDSTKSSRESSEARKGFSYLVTGVTTVGVAYAAKNAVTQFVSSMSASADVLALAKIEIKLSDIPEGKNMAFKWRGKPLFVRHRTQKEIEQEAAVELSQLRDPQHDLDRVKKPEWVILIGVCTHLGCVPIANAGDFGGYYCPCHGSHYDASGRIRLGPAPLNLEVPTYEFTSDDMVIVG</sequence>
<keyword id="KW-0001">2Fe-2S</keyword>
<keyword id="KW-1015">Disulfide bond</keyword>
<keyword id="KW-0249">Electron transport</keyword>
<keyword id="KW-0408">Iron</keyword>
<keyword id="KW-0411">Iron-sulfur</keyword>
<keyword id="KW-0472">Membrane</keyword>
<keyword id="KW-0479">Metal-binding</keyword>
<keyword id="KW-0496">Mitochondrion</keyword>
<keyword id="KW-0999">Mitochondrion inner membrane</keyword>
<keyword id="KW-1185">Reference proteome</keyword>
<keyword id="KW-0679">Respiratory chain</keyword>
<keyword id="KW-0809">Transit peptide</keyword>
<keyword id="KW-1278">Translocase</keyword>
<keyword id="KW-0812">Transmembrane</keyword>
<keyword id="KW-1133">Transmembrane helix</keyword>
<keyword id="KW-0813">Transport</keyword>
<dbReference type="EC" id="7.1.1.8"/>
<dbReference type="EMBL" id="AY387498">
    <property type="protein sequence ID" value="AAR32727.1"/>
    <property type="molecule type" value="Genomic_DNA"/>
</dbReference>
<dbReference type="EMBL" id="AY387497">
    <property type="protein sequence ID" value="AAR32727.1"/>
    <property type="status" value="JOINED"/>
    <property type="molecule type" value="Genomic_DNA"/>
</dbReference>
<dbReference type="RefSeq" id="XP_016791072.1">
    <property type="nucleotide sequence ID" value="XM_016935583.4"/>
</dbReference>
<dbReference type="SMR" id="Q69BK5"/>
<dbReference type="FunCoup" id="Q69BK5">
    <property type="interactions" value="1228"/>
</dbReference>
<dbReference type="STRING" id="9598.ENSPTRP00000018458"/>
<dbReference type="PaxDb" id="9598-ENSPTRP00000024815"/>
<dbReference type="Ensembl" id="ENSPTRT00000019954.3">
    <property type="protein sequence ID" value="ENSPTRP00000018458.3"/>
    <property type="gene ID" value="ENSPTRG00000010777.3"/>
</dbReference>
<dbReference type="GeneID" id="741344"/>
<dbReference type="KEGG" id="ptr:741344"/>
<dbReference type="CTD" id="7386"/>
<dbReference type="eggNOG" id="KOG1671">
    <property type="taxonomic scope" value="Eukaryota"/>
</dbReference>
<dbReference type="GeneTree" id="ENSGT00390000001014"/>
<dbReference type="InParanoid" id="Q69BK5"/>
<dbReference type="OMA" id="PPYDFND"/>
<dbReference type="OrthoDB" id="5587at9604"/>
<dbReference type="Proteomes" id="UP000002277">
    <property type="component" value="Chromosome 19"/>
</dbReference>
<dbReference type="Bgee" id="ENSPTRG00000010777">
    <property type="expression patterns" value="Expressed in hindlimb stylopod muscle and 21 other cell types or tissues"/>
</dbReference>
<dbReference type="GO" id="GO:0005743">
    <property type="term" value="C:mitochondrial inner membrane"/>
    <property type="evidence" value="ECO:0007669"/>
    <property type="project" value="UniProtKB-SubCell"/>
</dbReference>
<dbReference type="GO" id="GO:0005739">
    <property type="term" value="C:mitochondrion"/>
    <property type="evidence" value="ECO:0000250"/>
    <property type="project" value="UniProtKB"/>
</dbReference>
<dbReference type="GO" id="GO:0045275">
    <property type="term" value="C:respiratory chain complex III"/>
    <property type="evidence" value="ECO:0000318"/>
    <property type="project" value="GO_Central"/>
</dbReference>
<dbReference type="GO" id="GO:0051537">
    <property type="term" value="F:2 iron, 2 sulfur cluster binding"/>
    <property type="evidence" value="ECO:0007669"/>
    <property type="project" value="UniProtKB-KW"/>
</dbReference>
<dbReference type="GO" id="GO:0046872">
    <property type="term" value="F:metal ion binding"/>
    <property type="evidence" value="ECO:0007669"/>
    <property type="project" value="UniProtKB-KW"/>
</dbReference>
<dbReference type="GO" id="GO:0016491">
    <property type="term" value="F:oxidoreductase activity"/>
    <property type="evidence" value="ECO:0000318"/>
    <property type="project" value="GO_Central"/>
</dbReference>
<dbReference type="GO" id="GO:0008121">
    <property type="term" value="F:ubiquinol-cytochrome-c reductase activity"/>
    <property type="evidence" value="ECO:0007669"/>
    <property type="project" value="UniProtKB-EC"/>
</dbReference>
<dbReference type="GO" id="GO:0006122">
    <property type="term" value="P:mitochondrial electron transport, ubiquinol to cytochrome c"/>
    <property type="evidence" value="ECO:0000318"/>
    <property type="project" value="GO_Central"/>
</dbReference>
<dbReference type="GO" id="GO:0022904">
    <property type="term" value="P:respiratory electron transport chain"/>
    <property type="evidence" value="ECO:0000250"/>
    <property type="project" value="UniProtKB"/>
</dbReference>
<dbReference type="CDD" id="cd03470">
    <property type="entry name" value="Rieske_cytochrome_bc1"/>
    <property type="match status" value="1"/>
</dbReference>
<dbReference type="FunFam" id="1.20.5.270:FF:000001">
    <property type="entry name" value="Cytochrome b-c1 complex subunit Rieske, mitochondrial"/>
    <property type="match status" value="1"/>
</dbReference>
<dbReference type="FunFam" id="2.10.210.10:FF:000001">
    <property type="entry name" value="Cytochrome b-c1 complex subunit Rieske, mitochondrial"/>
    <property type="match status" value="1"/>
</dbReference>
<dbReference type="FunFam" id="2.102.10.10:FF:000001">
    <property type="entry name" value="Cytochrome b-c1 complex subunit Rieske, mitochondrial"/>
    <property type="match status" value="1"/>
</dbReference>
<dbReference type="Gene3D" id="2.10.210.10">
    <property type="entry name" value="Cytochrome Bc1 Complex, Chain I"/>
    <property type="match status" value="1"/>
</dbReference>
<dbReference type="Gene3D" id="2.102.10.10">
    <property type="entry name" value="Rieske [2Fe-2S] iron-sulphur domain"/>
    <property type="match status" value="1"/>
</dbReference>
<dbReference type="Gene3D" id="1.20.5.270">
    <property type="entry name" value="Ubiquinol cytochrome reductase, transmembrane domain"/>
    <property type="match status" value="1"/>
</dbReference>
<dbReference type="InterPro" id="IPR037008">
    <property type="entry name" value="bc1_Rieske_TM_sf"/>
</dbReference>
<dbReference type="InterPro" id="IPR011070">
    <property type="entry name" value="Globular_prot_asu/bsu"/>
</dbReference>
<dbReference type="InterPro" id="IPR017941">
    <property type="entry name" value="Rieske_2Fe-2S"/>
</dbReference>
<dbReference type="InterPro" id="IPR036922">
    <property type="entry name" value="Rieske_2Fe-2S_sf"/>
</dbReference>
<dbReference type="InterPro" id="IPR014349">
    <property type="entry name" value="Rieske_Fe-S_prot"/>
</dbReference>
<dbReference type="InterPro" id="IPR005805">
    <property type="entry name" value="Rieske_Fe-S_prot_C"/>
</dbReference>
<dbReference type="InterPro" id="IPR004192">
    <property type="entry name" value="Rieske_TM"/>
</dbReference>
<dbReference type="InterPro" id="IPR006317">
    <property type="entry name" value="Ubiquinol_cyt_c_Rdtase_Fe-S-su"/>
</dbReference>
<dbReference type="InterPro" id="IPR015248">
    <property type="entry name" value="UQCRFS1_N"/>
</dbReference>
<dbReference type="NCBIfam" id="TIGR01416">
    <property type="entry name" value="Rieske_proteo"/>
    <property type="match status" value="1"/>
</dbReference>
<dbReference type="PANTHER" id="PTHR10134">
    <property type="entry name" value="CYTOCHROME B-C1 COMPLEX SUBUNIT RIESKE, MITOCHONDRIAL"/>
    <property type="match status" value="1"/>
</dbReference>
<dbReference type="Pfam" id="PF00355">
    <property type="entry name" value="Rieske"/>
    <property type="match status" value="1"/>
</dbReference>
<dbReference type="Pfam" id="PF09165">
    <property type="entry name" value="Ubiq-Cytc-red_N"/>
    <property type="match status" value="1"/>
</dbReference>
<dbReference type="Pfam" id="PF02921">
    <property type="entry name" value="UCR_TM"/>
    <property type="match status" value="1"/>
</dbReference>
<dbReference type="PRINTS" id="PR00162">
    <property type="entry name" value="RIESKE"/>
</dbReference>
<dbReference type="SUPFAM" id="SSF50022">
    <property type="entry name" value="ISP domain"/>
    <property type="match status" value="1"/>
</dbReference>
<dbReference type="SUPFAM" id="SSF81502">
    <property type="entry name" value="ISP transmembrane anchor"/>
    <property type="match status" value="1"/>
</dbReference>
<dbReference type="SUPFAM" id="SSF56568">
    <property type="entry name" value="Non-globular alpha+beta subunits of globular proteins"/>
    <property type="match status" value="1"/>
</dbReference>
<dbReference type="PROSITE" id="PS51296">
    <property type="entry name" value="RIESKE"/>
    <property type="match status" value="1"/>
</dbReference>
<gene>
    <name type="primary">UQCRFS1</name>
</gene>
<reference key="1">
    <citation type="submission" date="2003-08" db="EMBL/GenBank/DDBJ databases">
        <title>Molecular evolution of the iron sulfur protein and subunit 9 of complex III of the electron transport chain in primates.</title>
        <authorList>
            <person name="Doan J.W."/>
            <person name="Wildman D.E."/>
            <person name="Schmidt T.R."/>
            <person name="Weiss M.L."/>
            <person name="Goodman M."/>
            <person name="Grossman L.I."/>
        </authorList>
    </citation>
    <scope>NUCLEOTIDE SEQUENCE [GENOMIC DNA]</scope>
</reference>